<reference key="1">
    <citation type="journal article" date="1998" name="Development">
        <title>The enhancer of polycomb gene of Drosophila encodes a chromatin protein conserved in yeast and mammals.</title>
        <authorList>
            <person name="Stankunas K."/>
            <person name="Berger J."/>
            <person name="Ruse C."/>
            <person name="Sinclair D.A.R."/>
            <person name="Randazzo F."/>
            <person name="Brock H.W."/>
        </authorList>
    </citation>
    <scope>NUCLEOTIDE SEQUENCE [MRNA] (ISOFORM 2)</scope>
    <scope>TISSUE SPECIFICITY</scope>
</reference>
<reference key="2">
    <citation type="journal article" date="2005" name="Science">
        <title>The transcriptional landscape of the mammalian genome.</title>
        <authorList>
            <person name="Carninci P."/>
            <person name="Kasukawa T."/>
            <person name="Katayama S."/>
            <person name="Gough J."/>
            <person name="Frith M.C."/>
            <person name="Maeda N."/>
            <person name="Oyama R."/>
            <person name="Ravasi T."/>
            <person name="Lenhard B."/>
            <person name="Wells C."/>
            <person name="Kodzius R."/>
            <person name="Shimokawa K."/>
            <person name="Bajic V.B."/>
            <person name="Brenner S.E."/>
            <person name="Batalov S."/>
            <person name="Forrest A.R."/>
            <person name="Zavolan M."/>
            <person name="Davis M.J."/>
            <person name="Wilming L.G."/>
            <person name="Aidinis V."/>
            <person name="Allen J.E."/>
            <person name="Ambesi-Impiombato A."/>
            <person name="Apweiler R."/>
            <person name="Aturaliya R.N."/>
            <person name="Bailey T.L."/>
            <person name="Bansal M."/>
            <person name="Baxter L."/>
            <person name="Beisel K.W."/>
            <person name="Bersano T."/>
            <person name="Bono H."/>
            <person name="Chalk A.M."/>
            <person name="Chiu K.P."/>
            <person name="Choudhary V."/>
            <person name="Christoffels A."/>
            <person name="Clutterbuck D.R."/>
            <person name="Crowe M.L."/>
            <person name="Dalla E."/>
            <person name="Dalrymple B.P."/>
            <person name="de Bono B."/>
            <person name="Della Gatta G."/>
            <person name="di Bernardo D."/>
            <person name="Down T."/>
            <person name="Engstrom P."/>
            <person name="Fagiolini M."/>
            <person name="Faulkner G."/>
            <person name="Fletcher C.F."/>
            <person name="Fukushima T."/>
            <person name="Furuno M."/>
            <person name="Futaki S."/>
            <person name="Gariboldi M."/>
            <person name="Georgii-Hemming P."/>
            <person name="Gingeras T.R."/>
            <person name="Gojobori T."/>
            <person name="Green R.E."/>
            <person name="Gustincich S."/>
            <person name="Harbers M."/>
            <person name="Hayashi Y."/>
            <person name="Hensch T.K."/>
            <person name="Hirokawa N."/>
            <person name="Hill D."/>
            <person name="Huminiecki L."/>
            <person name="Iacono M."/>
            <person name="Ikeo K."/>
            <person name="Iwama A."/>
            <person name="Ishikawa T."/>
            <person name="Jakt M."/>
            <person name="Kanapin A."/>
            <person name="Katoh M."/>
            <person name="Kawasawa Y."/>
            <person name="Kelso J."/>
            <person name="Kitamura H."/>
            <person name="Kitano H."/>
            <person name="Kollias G."/>
            <person name="Krishnan S.P."/>
            <person name="Kruger A."/>
            <person name="Kummerfeld S.K."/>
            <person name="Kurochkin I.V."/>
            <person name="Lareau L.F."/>
            <person name="Lazarevic D."/>
            <person name="Lipovich L."/>
            <person name="Liu J."/>
            <person name="Liuni S."/>
            <person name="McWilliam S."/>
            <person name="Madan Babu M."/>
            <person name="Madera M."/>
            <person name="Marchionni L."/>
            <person name="Matsuda H."/>
            <person name="Matsuzawa S."/>
            <person name="Miki H."/>
            <person name="Mignone F."/>
            <person name="Miyake S."/>
            <person name="Morris K."/>
            <person name="Mottagui-Tabar S."/>
            <person name="Mulder N."/>
            <person name="Nakano N."/>
            <person name="Nakauchi H."/>
            <person name="Ng P."/>
            <person name="Nilsson R."/>
            <person name="Nishiguchi S."/>
            <person name="Nishikawa S."/>
            <person name="Nori F."/>
            <person name="Ohara O."/>
            <person name="Okazaki Y."/>
            <person name="Orlando V."/>
            <person name="Pang K.C."/>
            <person name="Pavan W.J."/>
            <person name="Pavesi G."/>
            <person name="Pesole G."/>
            <person name="Petrovsky N."/>
            <person name="Piazza S."/>
            <person name="Reed J."/>
            <person name="Reid J.F."/>
            <person name="Ring B.Z."/>
            <person name="Ringwald M."/>
            <person name="Rost B."/>
            <person name="Ruan Y."/>
            <person name="Salzberg S.L."/>
            <person name="Sandelin A."/>
            <person name="Schneider C."/>
            <person name="Schoenbach C."/>
            <person name="Sekiguchi K."/>
            <person name="Semple C.A."/>
            <person name="Seno S."/>
            <person name="Sessa L."/>
            <person name="Sheng Y."/>
            <person name="Shibata Y."/>
            <person name="Shimada H."/>
            <person name="Shimada K."/>
            <person name="Silva D."/>
            <person name="Sinclair B."/>
            <person name="Sperling S."/>
            <person name="Stupka E."/>
            <person name="Sugiura K."/>
            <person name="Sultana R."/>
            <person name="Takenaka Y."/>
            <person name="Taki K."/>
            <person name="Tammoja K."/>
            <person name="Tan S.L."/>
            <person name="Tang S."/>
            <person name="Taylor M.S."/>
            <person name="Tegner J."/>
            <person name="Teichmann S.A."/>
            <person name="Ueda H.R."/>
            <person name="van Nimwegen E."/>
            <person name="Verardo R."/>
            <person name="Wei C.L."/>
            <person name="Yagi K."/>
            <person name="Yamanishi H."/>
            <person name="Zabarovsky E."/>
            <person name="Zhu S."/>
            <person name="Zimmer A."/>
            <person name="Hide W."/>
            <person name="Bult C."/>
            <person name="Grimmond S.M."/>
            <person name="Teasdale R.D."/>
            <person name="Liu E.T."/>
            <person name="Brusic V."/>
            <person name="Quackenbush J."/>
            <person name="Wahlestedt C."/>
            <person name="Mattick J.S."/>
            <person name="Hume D.A."/>
            <person name="Kai C."/>
            <person name="Sasaki D."/>
            <person name="Tomaru Y."/>
            <person name="Fukuda S."/>
            <person name="Kanamori-Katayama M."/>
            <person name="Suzuki M."/>
            <person name="Aoki J."/>
            <person name="Arakawa T."/>
            <person name="Iida J."/>
            <person name="Imamura K."/>
            <person name="Itoh M."/>
            <person name="Kato T."/>
            <person name="Kawaji H."/>
            <person name="Kawagashira N."/>
            <person name="Kawashima T."/>
            <person name="Kojima M."/>
            <person name="Kondo S."/>
            <person name="Konno H."/>
            <person name="Nakano K."/>
            <person name="Ninomiya N."/>
            <person name="Nishio T."/>
            <person name="Okada M."/>
            <person name="Plessy C."/>
            <person name="Shibata K."/>
            <person name="Shiraki T."/>
            <person name="Suzuki S."/>
            <person name="Tagami M."/>
            <person name="Waki K."/>
            <person name="Watahiki A."/>
            <person name="Okamura-Oho Y."/>
            <person name="Suzuki H."/>
            <person name="Kawai J."/>
            <person name="Hayashizaki Y."/>
        </authorList>
    </citation>
    <scope>NUCLEOTIDE SEQUENCE [LARGE SCALE MRNA] (ISOFORM 1)</scope>
    <source>
        <strain>C57BL/6J</strain>
        <tissue>Thymus</tissue>
    </source>
</reference>
<reference key="3">
    <citation type="journal article" date="2004" name="Genome Res.">
        <title>The status, quality, and expansion of the NIH full-length cDNA project: the Mammalian Gene Collection (MGC).</title>
        <authorList>
            <consortium name="The MGC Project Team"/>
        </authorList>
    </citation>
    <scope>NUCLEOTIDE SEQUENCE [LARGE SCALE MRNA] (ISOFORM 1)</scope>
    <source>
        <tissue>Brain</tissue>
    </source>
</reference>
<reference key="4">
    <citation type="journal article" date="2010" name="Cell">
        <title>A tissue-specific atlas of mouse protein phosphorylation and expression.</title>
        <authorList>
            <person name="Huttlin E.L."/>
            <person name="Jedrychowski M.P."/>
            <person name="Elias J.E."/>
            <person name="Goswami T."/>
            <person name="Rad R."/>
            <person name="Beausoleil S.A."/>
            <person name="Villen J."/>
            <person name="Haas W."/>
            <person name="Sowa M.E."/>
            <person name="Gygi S.P."/>
        </authorList>
    </citation>
    <scope>IDENTIFICATION BY MASS SPECTROMETRY [LARGE SCALE ANALYSIS]</scope>
    <source>
        <tissue>Lung</tissue>
    </source>
</reference>
<reference key="5">
    <citation type="journal article" date="2017" name="Mol. Cell. Biol.">
        <title>EPC1/TIP60-mediated histone acetylation facilitates spermiogenesis in mice.</title>
        <authorList>
            <person name="Dong Y."/>
            <person name="Isono K.I."/>
            <person name="Ohbo K."/>
            <person name="Endo T.A."/>
            <person name="Ohara O."/>
            <person name="Maekawa M."/>
            <person name="Toyama Y."/>
            <person name="Ito C."/>
            <person name="Toshimori K."/>
            <person name="Helin K."/>
            <person name="Ogonuki N."/>
            <person name="Inoue K."/>
            <person name="Ogura A."/>
            <person name="Yamagata K."/>
            <person name="Kitabayashi I."/>
            <person name="Koseki H."/>
        </authorList>
    </citation>
    <scope>FUNCTION</scope>
    <scope>SUBCELLULAR LOCATION</scope>
    <scope>DISRUPTION PHENOTYPE</scope>
    <scope>TISSUE SPECIFICITY</scope>
</reference>
<evidence type="ECO:0000250" key="1">
    <source>
        <dbReference type="UniProtKB" id="Q9H2F5"/>
    </source>
</evidence>
<evidence type="ECO:0000256" key="2">
    <source>
        <dbReference type="SAM" id="MobiDB-lite"/>
    </source>
</evidence>
<evidence type="ECO:0000269" key="3">
    <source>
    </source>
</evidence>
<evidence type="ECO:0000269" key="4">
    <source>
    </source>
</evidence>
<evidence type="ECO:0000303" key="5">
    <source>
    </source>
</evidence>
<evidence type="ECO:0000305" key="6"/>
<evidence type="ECO:0000312" key="7">
    <source>
        <dbReference type="MGI" id="MGI:1278322"/>
    </source>
</evidence>
<accession>Q8C9X6</accession>
<accession>B2RRY2</accession>
<accession>Q9Z299</accession>
<organism>
    <name type="scientific">Mus musculus</name>
    <name type="common">Mouse</name>
    <dbReference type="NCBI Taxonomy" id="10090"/>
    <lineage>
        <taxon>Eukaryota</taxon>
        <taxon>Metazoa</taxon>
        <taxon>Chordata</taxon>
        <taxon>Craniata</taxon>
        <taxon>Vertebrata</taxon>
        <taxon>Euteleostomi</taxon>
        <taxon>Mammalia</taxon>
        <taxon>Eutheria</taxon>
        <taxon>Euarchontoglires</taxon>
        <taxon>Glires</taxon>
        <taxon>Rodentia</taxon>
        <taxon>Myomorpha</taxon>
        <taxon>Muroidea</taxon>
        <taxon>Muridae</taxon>
        <taxon>Murinae</taxon>
        <taxon>Mus</taxon>
        <taxon>Mus</taxon>
    </lineage>
</organism>
<comment type="function">
    <text evidence="1 3">Component of the NuA4 histone acetyltransferase (HAT) complex, a multiprotein complex involved in transcriptional activation of select genes principally by acetylation of nucleosomal histones H4 and H2A (PubMed:28694333). The NuA4 complex plays a direct role in repair of DNA double-strand breaks (DSBs) by promoting homologous recombination (HR) (By similarity). The NuA4 complex is also required for spermatid development by promoting acetylation of histones: histone acetylation is required for histone replacement during the transition from round to elongating spermatids (PubMed:28694333). In the NuA4 complex, EPC1 is required to recruit MBTD1 into the complex (By similarity).</text>
</comment>
<comment type="subunit">
    <text evidence="1">Component of the NuA4 histone acetyltransferase complex which contains the catalytic subunit KAT5/TIP60 and the subunits EP400, TRRAP/PAF400, BRD8/SMAP, EPC1, DMAP1/DNMAP1, RUVBL1/TIP49, RUVBL2, ING3, actin, ACTL6A/BAF53A, MORF4L1/MRG15, MORF4L2/MRGX, MRGBP, YEATS4/GAS41, VPS72/YL1 and MEAF6 (By similarity). KAT5/TIP60, EPC1, and ING3 together constitute a minimal HAT complex termed Piccolo NuA4 (By similarity). Component of a NuA4-related complex which contains EP400, TRRAP/PAF400, SRCAP, BRD8/SMAP, EPC1, DMAP1/DNMAP1, RUVBL1/TIP49, RUVBL2, actin, ACTL6A/BAF53A, VPS72 and YEATS4/GAS41 (By similarity). Interacts with TRIM27 (By similarity). Interacts with MBTD1; interaction is direct and promotes recruitment of MBTD1 into the NuA4 histone acetyltransferase complex (By similarity).</text>
</comment>
<comment type="subcellular location">
    <subcellularLocation>
        <location evidence="3">Nucleus</location>
    </subcellularLocation>
    <subcellularLocation>
        <location evidence="3">Cytoplasm</location>
    </subcellularLocation>
</comment>
<comment type="alternative products">
    <event type="alternative splicing"/>
    <isoform>
        <id>Q8C9X6-1</id>
        <name>1</name>
        <sequence type="displayed"/>
    </isoform>
    <isoform>
        <id>Q8C9X6-2</id>
        <name>2</name>
        <sequence type="described" ref="VSP_012878"/>
    </isoform>
</comment>
<comment type="tissue specificity">
    <text evidence="3 4">Expressed in adult brain, heart, kidney, liver, lung, skeletal muscle and testis (PubMed:9735366). Expressed in male germ cells, present in round spermatids of steps 1 to 4 (PubMed:28694333).</text>
</comment>
<comment type="disruption phenotype">
    <text evidence="3">Mice are viable but display growth retardation, homeotic transformations of the axis and sterility in both males and females (PubMed:28694333). Male sterility is caused by defects in generation of elongating spermatids (PubMed:28694333).</text>
</comment>
<comment type="similarity">
    <text evidence="6">Belongs to the enhancer of polycomb family.</text>
</comment>
<keyword id="KW-0010">Activator</keyword>
<keyword id="KW-0025">Alternative splicing</keyword>
<keyword id="KW-0156">Chromatin regulator</keyword>
<keyword id="KW-0963">Cytoplasm</keyword>
<keyword id="KW-0221">Differentiation</keyword>
<keyword id="KW-0341">Growth regulation</keyword>
<keyword id="KW-1017">Isopeptide bond</keyword>
<keyword id="KW-0539">Nucleus</keyword>
<keyword id="KW-0597">Phosphoprotein</keyword>
<keyword id="KW-1185">Reference proteome</keyword>
<keyword id="KW-0744">Spermatogenesis</keyword>
<keyword id="KW-0804">Transcription</keyword>
<keyword id="KW-0805">Transcription regulation</keyword>
<keyword id="KW-0832">Ubl conjugation</keyword>
<proteinExistence type="evidence at protein level"/>
<name>EPC1_MOUSE</name>
<sequence length="813" mass="90411">MSKLSFRARALDASKPLPVFRCEDLPDLHEYASINRAVPQMPTGMEKEEESEHHLQRAISAQQVYGEKRDNMVIPVPEAESNIAYYESIYPGEFRMPKQLIHIQPFSLDAEQPDYDLDSEDEVFVNKLKKKMDICPLQFEEMIDRLEKGSGQQPVSLQEAKLLLKEDDELIREVYEYWIKKRKTCRGSSLIPLVKQEKRDGSSTNDPYVAFRRRTEKMQTRKNRKNDEASYEKMLKLRRDLSRAVTILEMIKRREKSKRELLHLTLEIMEKRYNLGDYSGEIMSEVMAQRQPVKPTYAIPIIPITNSSQFKHQDATDSKEFKVNKQDKADLIRPKRKYEKKPKVLPPSAAAPQQQSPAALPGFSAKDLNQYDFPSSDEEPLSQVLSGSSEAEEENDPDGPFAFRRKAGCQYYAPHLDQTGNWPWTSPKDGGLGDVRYRYCLTTLTVPQRCLGFARRRVGRGGRVVLDRAHSDYDSMFHHLDLDMLSSPQPSPVNQFANTSEPNTSDRSSSKDLSQILVDIKSCRWRHFRPRTPSLPDSDSGELSSRKLHRSISRAGAAQPGAHTCSTSTQNRSSSGSAHCAFTAEQYQQHQQQLALMQQQQLAQTQQQQQANSSSSAAAQQGFVSKTLDSASAQFAASALMTSEQLLGFKVKDDVVLGLGVNGVLPASGVYKGLHLSSTTPTALVHTSPSTAGSTLLQPSNITQTSGSHSSLSHQVTAASSATTQVLFGNNIRLTVPSSVPTVNSVTPINARHIPRTLSAVPPSALKLAAAANCQVSKVPSSSSVDSVPRENHESEKPALNNIADNTVAMEVT</sequence>
<dbReference type="EMBL" id="AF079765">
    <property type="protein sequence ID" value="AAC64272.1"/>
    <property type="molecule type" value="mRNA"/>
</dbReference>
<dbReference type="EMBL" id="AK040254">
    <property type="protein sequence ID" value="BAC30552.1"/>
    <property type="molecule type" value="mRNA"/>
</dbReference>
<dbReference type="EMBL" id="BC138622">
    <property type="protein sequence ID" value="AAI38623.1"/>
    <property type="molecule type" value="mRNA"/>
</dbReference>
<dbReference type="EMBL" id="BC138623">
    <property type="protein sequence ID" value="AAI38624.1"/>
    <property type="molecule type" value="mRNA"/>
</dbReference>
<dbReference type="CCDS" id="CCDS29041.1">
    <molecule id="Q8C9X6-1"/>
</dbReference>
<dbReference type="CCDS" id="CCDS37726.1">
    <molecule id="Q8C9X6-2"/>
</dbReference>
<dbReference type="RefSeq" id="NP_001263279.1">
    <property type="nucleotide sequence ID" value="NM_001276350.1"/>
</dbReference>
<dbReference type="RefSeq" id="NP_031961.1">
    <molecule id="Q8C9X6-2"/>
    <property type="nucleotide sequence ID" value="NM_007935.2"/>
</dbReference>
<dbReference type="RefSeq" id="NP_081773.1">
    <molecule id="Q8C9X6-1"/>
    <property type="nucleotide sequence ID" value="NM_027497.3"/>
</dbReference>
<dbReference type="SMR" id="Q8C9X6"/>
<dbReference type="BioGRID" id="199466">
    <property type="interactions" value="11"/>
</dbReference>
<dbReference type="ComplexPortal" id="CPX-747">
    <property type="entry name" value="Piccolo NuA4 histone acetyltransferase complex"/>
</dbReference>
<dbReference type="ComplexPortal" id="CPX-990">
    <property type="entry name" value="NuA4 histone acetyltransferase complex"/>
</dbReference>
<dbReference type="FunCoup" id="Q8C9X6">
    <property type="interactions" value="2914"/>
</dbReference>
<dbReference type="IntAct" id="Q8C9X6">
    <property type="interactions" value="5"/>
</dbReference>
<dbReference type="MINT" id="Q8C9X6"/>
<dbReference type="STRING" id="10090.ENSMUSP00000028100"/>
<dbReference type="iPTMnet" id="Q8C9X6"/>
<dbReference type="PhosphoSitePlus" id="Q8C9X6"/>
<dbReference type="jPOST" id="Q8C9X6"/>
<dbReference type="PaxDb" id="10090-ENSMUSP00000028100"/>
<dbReference type="ProteomicsDB" id="275930">
    <molecule id="Q8C9X6-1"/>
</dbReference>
<dbReference type="ProteomicsDB" id="275931">
    <molecule id="Q8C9X6-2"/>
</dbReference>
<dbReference type="Antibodypedia" id="26401">
    <property type="antibodies" value="93 antibodies from 21 providers"/>
</dbReference>
<dbReference type="DNASU" id="13831"/>
<dbReference type="Ensembl" id="ENSMUST00000028100.13">
    <molecule id="Q8C9X6-1"/>
    <property type="protein sequence ID" value="ENSMUSP00000028100.7"/>
    <property type="gene ID" value="ENSMUSG00000024240.14"/>
</dbReference>
<dbReference type="Ensembl" id="ENSMUST00000115870.9">
    <molecule id="Q8C9X6-2"/>
    <property type="protein sequence ID" value="ENSMUSP00000111536.3"/>
    <property type="gene ID" value="ENSMUSG00000024240.14"/>
</dbReference>
<dbReference type="GeneID" id="13831"/>
<dbReference type="KEGG" id="mmu:13831"/>
<dbReference type="UCSC" id="uc008dzi.2">
    <molecule id="Q8C9X6-1"/>
    <property type="organism name" value="mouse"/>
</dbReference>
<dbReference type="UCSC" id="uc008dzj.2">
    <molecule id="Q8C9X6-2"/>
    <property type="organism name" value="mouse"/>
</dbReference>
<dbReference type="AGR" id="MGI:1278322"/>
<dbReference type="CTD" id="80314"/>
<dbReference type="MGI" id="MGI:1278322">
    <property type="gene designation" value="Epc1"/>
</dbReference>
<dbReference type="VEuPathDB" id="HostDB:ENSMUSG00000024240"/>
<dbReference type="eggNOG" id="KOG2261">
    <property type="taxonomic scope" value="Eukaryota"/>
</dbReference>
<dbReference type="GeneTree" id="ENSGT00940000155003"/>
<dbReference type="HOGENOM" id="CLU_012781_0_0_1"/>
<dbReference type="InParanoid" id="Q8C9X6"/>
<dbReference type="OMA" id="RPKRRYE"/>
<dbReference type="OrthoDB" id="435275at2759"/>
<dbReference type="PhylomeDB" id="Q8C9X6"/>
<dbReference type="TreeFam" id="TF106438"/>
<dbReference type="Reactome" id="R-MMU-8953750">
    <property type="pathway name" value="Transcriptional Regulation by E2F6"/>
</dbReference>
<dbReference type="BioGRID-ORCS" id="13831">
    <property type="hits" value="3 hits in 81 CRISPR screens"/>
</dbReference>
<dbReference type="ChiTaRS" id="Epc1">
    <property type="organism name" value="mouse"/>
</dbReference>
<dbReference type="PRO" id="PR:Q8C9X6"/>
<dbReference type="Proteomes" id="UP000000589">
    <property type="component" value="Chromosome 18"/>
</dbReference>
<dbReference type="RNAct" id="Q8C9X6">
    <property type="molecule type" value="protein"/>
</dbReference>
<dbReference type="Bgee" id="ENSMUSG00000024240">
    <property type="expression patterns" value="Expressed in metanephric mesenchyme and 262 other cell types or tissues"/>
</dbReference>
<dbReference type="ExpressionAtlas" id="Q8C9X6">
    <property type="expression patterns" value="baseline and differential"/>
</dbReference>
<dbReference type="GO" id="GO:0005737">
    <property type="term" value="C:cytoplasm"/>
    <property type="evidence" value="ECO:0007669"/>
    <property type="project" value="UniProtKB-SubCell"/>
</dbReference>
<dbReference type="GO" id="GO:0035267">
    <property type="term" value="C:NuA4 histone acetyltransferase complex"/>
    <property type="evidence" value="ECO:0000250"/>
    <property type="project" value="UniProtKB"/>
</dbReference>
<dbReference type="GO" id="GO:0016604">
    <property type="term" value="C:nuclear body"/>
    <property type="evidence" value="ECO:0007669"/>
    <property type="project" value="Ensembl"/>
</dbReference>
<dbReference type="GO" id="GO:0031965">
    <property type="term" value="C:nuclear membrane"/>
    <property type="evidence" value="ECO:0000266"/>
    <property type="project" value="MGI"/>
</dbReference>
<dbReference type="GO" id="GO:0005730">
    <property type="term" value="C:nucleolus"/>
    <property type="evidence" value="ECO:0007669"/>
    <property type="project" value="Ensembl"/>
</dbReference>
<dbReference type="GO" id="GO:0005654">
    <property type="term" value="C:nucleoplasm"/>
    <property type="evidence" value="ECO:0000266"/>
    <property type="project" value="MGI"/>
</dbReference>
<dbReference type="GO" id="GO:0000786">
    <property type="term" value="C:nucleosome"/>
    <property type="evidence" value="ECO:0000266"/>
    <property type="project" value="ComplexPortal"/>
</dbReference>
<dbReference type="GO" id="GO:0005634">
    <property type="term" value="C:nucleus"/>
    <property type="evidence" value="ECO:0000266"/>
    <property type="project" value="MGI"/>
</dbReference>
<dbReference type="GO" id="GO:0032777">
    <property type="term" value="C:piccolo histone acetyltransferase complex"/>
    <property type="evidence" value="ECO:0000250"/>
    <property type="project" value="UniProtKB"/>
</dbReference>
<dbReference type="GO" id="GO:0035861">
    <property type="term" value="C:site of double-strand break"/>
    <property type="evidence" value="ECO:0007669"/>
    <property type="project" value="Ensembl"/>
</dbReference>
<dbReference type="GO" id="GO:0140463">
    <property type="term" value="F:chromatin-protein adaptor activity"/>
    <property type="evidence" value="ECO:0000250"/>
    <property type="project" value="UniProtKB"/>
</dbReference>
<dbReference type="GO" id="GO:0140767">
    <property type="term" value="F:enzyme-substrate adaptor activity"/>
    <property type="evidence" value="ECO:0007669"/>
    <property type="project" value="Ensembl"/>
</dbReference>
<dbReference type="GO" id="GO:0000724">
    <property type="term" value="P:double-strand break repair via homologous recombination"/>
    <property type="evidence" value="ECO:0000250"/>
    <property type="project" value="UniProtKB"/>
</dbReference>
<dbReference type="GO" id="GO:0045814">
    <property type="term" value="P:negative regulation of gene expression, epigenetic"/>
    <property type="evidence" value="ECO:0000266"/>
    <property type="project" value="MGI"/>
</dbReference>
<dbReference type="GO" id="GO:0000122">
    <property type="term" value="P:negative regulation of transcription by RNA polymerase II"/>
    <property type="evidence" value="ECO:0000266"/>
    <property type="project" value="MGI"/>
</dbReference>
<dbReference type="GO" id="GO:0045893">
    <property type="term" value="P:positive regulation of DNA-templated transcription"/>
    <property type="evidence" value="ECO:0000303"/>
    <property type="project" value="ComplexPortal"/>
</dbReference>
<dbReference type="GO" id="GO:1905168">
    <property type="term" value="P:positive regulation of double-strand break repair via homologous recombination"/>
    <property type="evidence" value="ECO:0000266"/>
    <property type="project" value="ComplexPortal"/>
</dbReference>
<dbReference type="GO" id="GO:0051155">
    <property type="term" value="P:positive regulation of striated muscle cell differentiation"/>
    <property type="evidence" value="ECO:0000247"/>
    <property type="project" value="MGI"/>
</dbReference>
<dbReference type="GO" id="GO:0045944">
    <property type="term" value="P:positive regulation of transcription by RNA polymerase II"/>
    <property type="evidence" value="ECO:0000247"/>
    <property type="project" value="MGI"/>
</dbReference>
<dbReference type="GO" id="GO:0042981">
    <property type="term" value="P:regulation of apoptotic process"/>
    <property type="evidence" value="ECO:0000303"/>
    <property type="project" value="ComplexPortal"/>
</dbReference>
<dbReference type="GO" id="GO:0051726">
    <property type="term" value="P:regulation of cell cycle"/>
    <property type="evidence" value="ECO:0000266"/>
    <property type="project" value="ComplexPortal"/>
</dbReference>
<dbReference type="GO" id="GO:1902275">
    <property type="term" value="P:regulation of chromatin organization"/>
    <property type="evidence" value="ECO:0000303"/>
    <property type="project" value="ComplexPortal"/>
</dbReference>
<dbReference type="GO" id="GO:2000779">
    <property type="term" value="P:regulation of double-strand break repair"/>
    <property type="evidence" value="ECO:0000303"/>
    <property type="project" value="ComplexPortal"/>
</dbReference>
<dbReference type="GO" id="GO:0035092">
    <property type="term" value="P:sperm DNA condensation"/>
    <property type="evidence" value="ECO:0007669"/>
    <property type="project" value="Ensembl"/>
</dbReference>
<dbReference type="GO" id="GO:0035886">
    <property type="term" value="P:vascular associated smooth muscle cell differentiation"/>
    <property type="evidence" value="ECO:0007669"/>
    <property type="project" value="Ensembl"/>
</dbReference>
<dbReference type="InterPro" id="IPR024943">
    <property type="entry name" value="Enhancer_polycomb"/>
</dbReference>
<dbReference type="InterPro" id="IPR019542">
    <property type="entry name" value="Enhancer_polycomb-like_N"/>
</dbReference>
<dbReference type="InterPro" id="IPR009607">
    <property type="entry name" value="Enhancer_polycomb_C"/>
</dbReference>
<dbReference type="PANTHER" id="PTHR14898">
    <property type="entry name" value="ENHANCER OF POLYCOMB"/>
    <property type="match status" value="1"/>
</dbReference>
<dbReference type="Pfam" id="PF06752">
    <property type="entry name" value="E_Pc_C"/>
    <property type="match status" value="1"/>
</dbReference>
<dbReference type="Pfam" id="PF10513">
    <property type="entry name" value="EPL1"/>
    <property type="match status" value="1"/>
</dbReference>
<protein>
    <recommendedName>
        <fullName evidence="6">Enhancer of polycomb homolog 1</fullName>
    </recommendedName>
</protein>
<gene>
    <name evidence="5 7" type="primary">Epc1</name>
</gene>
<feature type="chain" id="PRO_0000214154" description="Enhancer of polycomb homolog 1">
    <location>
        <begin position="1"/>
        <end position="813"/>
    </location>
</feature>
<feature type="region of interest" description="Disordered" evidence="2">
    <location>
        <begin position="310"/>
        <end position="403"/>
    </location>
</feature>
<feature type="region of interest" description="Disordered" evidence="2">
    <location>
        <begin position="484"/>
        <end position="513"/>
    </location>
</feature>
<feature type="region of interest" description="Disordered" evidence="2">
    <location>
        <begin position="528"/>
        <end position="577"/>
    </location>
</feature>
<feature type="region of interest" description="Disordered" evidence="2">
    <location>
        <begin position="779"/>
        <end position="813"/>
    </location>
</feature>
<feature type="compositionally biased region" description="Basic and acidic residues" evidence="2">
    <location>
        <begin position="311"/>
        <end position="333"/>
    </location>
</feature>
<feature type="compositionally biased region" description="Low complexity" evidence="2">
    <location>
        <begin position="346"/>
        <end position="361"/>
    </location>
</feature>
<feature type="compositionally biased region" description="Polar residues" evidence="2">
    <location>
        <begin position="486"/>
        <end position="513"/>
    </location>
</feature>
<feature type="compositionally biased region" description="Low complexity" evidence="2">
    <location>
        <begin position="564"/>
        <end position="577"/>
    </location>
</feature>
<feature type="compositionally biased region" description="Basic and acidic residues" evidence="2">
    <location>
        <begin position="788"/>
        <end position="797"/>
    </location>
</feature>
<feature type="modified residue" description="Phosphoserine" evidence="1">
    <location>
        <position position="538"/>
    </location>
</feature>
<feature type="cross-link" description="Glycyl lysine isopeptide (Lys-Gly) (interchain with G-Cter in SUMO2)" evidence="1">
    <location>
        <position position="319"/>
    </location>
</feature>
<feature type="cross-link" description="Glycyl lysine isopeptide (Lys-Gly) (interchain with G-Cter in SUMO2)" evidence="1">
    <location>
        <position position="650"/>
    </location>
</feature>
<feature type="splice variant" id="VSP_012878" description="In isoform 2." evidence="5">
    <original>MSKLSFRARALDASKPLPVFRCEDLPDLHEYASINRAVPQMPTGMEKEEES</original>
    <variation>M</variation>
    <location>
        <begin position="1"/>
        <end position="51"/>
    </location>
</feature>